<proteinExistence type="inferred from homology"/>
<accession>A1T4P5</accession>
<dbReference type="EMBL" id="CP000511">
    <property type="protein sequence ID" value="ABM12145.1"/>
    <property type="molecule type" value="Genomic_DNA"/>
</dbReference>
<dbReference type="RefSeq" id="WP_011778575.1">
    <property type="nucleotide sequence ID" value="NZ_JACKSD010000069.1"/>
</dbReference>
<dbReference type="SMR" id="A1T4P5"/>
<dbReference type="STRING" id="350058.Mvan_1311"/>
<dbReference type="KEGG" id="mva:Mvan_1311"/>
<dbReference type="eggNOG" id="COG0092">
    <property type="taxonomic scope" value="Bacteria"/>
</dbReference>
<dbReference type="HOGENOM" id="CLU_058591_0_0_11"/>
<dbReference type="Proteomes" id="UP000009159">
    <property type="component" value="Chromosome"/>
</dbReference>
<dbReference type="GO" id="GO:0022627">
    <property type="term" value="C:cytosolic small ribosomal subunit"/>
    <property type="evidence" value="ECO:0007669"/>
    <property type="project" value="TreeGrafter"/>
</dbReference>
<dbReference type="GO" id="GO:0003729">
    <property type="term" value="F:mRNA binding"/>
    <property type="evidence" value="ECO:0007669"/>
    <property type="project" value="UniProtKB-UniRule"/>
</dbReference>
<dbReference type="GO" id="GO:0019843">
    <property type="term" value="F:rRNA binding"/>
    <property type="evidence" value="ECO:0007669"/>
    <property type="project" value="UniProtKB-UniRule"/>
</dbReference>
<dbReference type="GO" id="GO:0003735">
    <property type="term" value="F:structural constituent of ribosome"/>
    <property type="evidence" value="ECO:0007669"/>
    <property type="project" value="InterPro"/>
</dbReference>
<dbReference type="GO" id="GO:0006412">
    <property type="term" value="P:translation"/>
    <property type="evidence" value="ECO:0007669"/>
    <property type="project" value="UniProtKB-UniRule"/>
</dbReference>
<dbReference type="CDD" id="cd02412">
    <property type="entry name" value="KH-II_30S_S3"/>
    <property type="match status" value="1"/>
</dbReference>
<dbReference type="FunFam" id="3.30.1140.32:FF:000002">
    <property type="entry name" value="30S ribosomal protein S3"/>
    <property type="match status" value="1"/>
</dbReference>
<dbReference type="FunFam" id="3.30.300.20:FF:000001">
    <property type="entry name" value="30S ribosomal protein S3"/>
    <property type="match status" value="1"/>
</dbReference>
<dbReference type="Gene3D" id="3.30.300.20">
    <property type="match status" value="1"/>
</dbReference>
<dbReference type="Gene3D" id="3.30.1140.32">
    <property type="entry name" value="Ribosomal protein S3, C-terminal domain"/>
    <property type="match status" value="1"/>
</dbReference>
<dbReference type="HAMAP" id="MF_01309_B">
    <property type="entry name" value="Ribosomal_uS3_B"/>
    <property type="match status" value="1"/>
</dbReference>
<dbReference type="InterPro" id="IPR004087">
    <property type="entry name" value="KH_dom"/>
</dbReference>
<dbReference type="InterPro" id="IPR015946">
    <property type="entry name" value="KH_dom-like_a/b"/>
</dbReference>
<dbReference type="InterPro" id="IPR004044">
    <property type="entry name" value="KH_dom_type_2"/>
</dbReference>
<dbReference type="InterPro" id="IPR009019">
    <property type="entry name" value="KH_sf_prok-type"/>
</dbReference>
<dbReference type="InterPro" id="IPR036419">
    <property type="entry name" value="Ribosomal_S3_C_sf"/>
</dbReference>
<dbReference type="InterPro" id="IPR005704">
    <property type="entry name" value="Ribosomal_uS3_bac-typ"/>
</dbReference>
<dbReference type="InterPro" id="IPR001351">
    <property type="entry name" value="Ribosomal_uS3_C"/>
</dbReference>
<dbReference type="InterPro" id="IPR018280">
    <property type="entry name" value="Ribosomal_uS3_CS"/>
</dbReference>
<dbReference type="NCBIfam" id="TIGR01009">
    <property type="entry name" value="rpsC_bact"/>
    <property type="match status" value="1"/>
</dbReference>
<dbReference type="PANTHER" id="PTHR11760">
    <property type="entry name" value="30S/40S RIBOSOMAL PROTEIN S3"/>
    <property type="match status" value="1"/>
</dbReference>
<dbReference type="PANTHER" id="PTHR11760:SF19">
    <property type="entry name" value="SMALL RIBOSOMAL SUBUNIT PROTEIN US3C"/>
    <property type="match status" value="1"/>
</dbReference>
<dbReference type="Pfam" id="PF07650">
    <property type="entry name" value="KH_2"/>
    <property type="match status" value="1"/>
</dbReference>
<dbReference type="Pfam" id="PF00189">
    <property type="entry name" value="Ribosomal_S3_C"/>
    <property type="match status" value="1"/>
</dbReference>
<dbReference type="SMART" id="SM00322">
    <property type="entry name" value="KH"/>
    <property type="match status" value="1"/>
</dbReference>
<dbReference type="SUPFAM" id="SSF54814">
    <property type="entry name" value="Prokaryotic type KH domain (KH-domain type II)"/>
    <property type="match status" value="1"/>
</dbReference>
<dbReference type="SUPFAM" id="SSF54821">
    <property type="entry name" value="Ribosomal protein S3 C-terminal domain"/>
    <property type="match status" value="1"/>
</dbReference>
<dbReference type="PROSITE" id="PS50823">
    <property type="entry name" value="KH_TYPE_2"/>
    <property type="match status" value="1"/>
</dbReference>
<dbReference type="PROSITE" id="PS00548">
    <property type="entry name" value="RIBOSOMAL_S3"/>
    <property type="match status" value="1"/>
</dbReference>
<gene>
    <name evidence="1" type="primary">rpsC</name>
    <name type="ordered locus">Mvan_1311</name>
</gene>
<evidence type="ECO:0000255" key="1">
    <source>
        <dbReference type="HAMAP-Rule" id="MF_01309"/>
    </source>
</evidence>
<evidence type="ECO:0000256" key="2">
    <source>
        <dbReference type="SAM" id="MobiDB-lite"/>
    </source>
</evidence>
<evidence type="ECO:0000305" key="3"/>
<protein>
    <recommendedName>
        <fullName evidence="1">Small ribosomal subunit protein uS3</fullName>
    </recommendedName>
    <alternativeName>
        <fullName evidence="3">30S ribosomal protein S3</fullName>
    </alternativeName>
</protein>
<organism>
    <name type="scientific">Mycolicibacterium vanbaalenii (strain DSM 7251 / JCM 13017 / BCRC 16820 / KCTC 9966 / NRRL B-24157 / PYR-1)</name>
    <name type="common">Mycobacterium vanbaalenii</name>
    <dbReference type="NCBI Taxonomy" id="350058"/>
    <lineage>
        <taxon>Bacteria</taxon>
        <taxon>Bacillati</taxon>
        <taxon>Actinomycetota</taxon>
        <taxon>Actinomycetes</taxon>
        <taxon>Mycobacteriales</taxon>
        <taxon>Mycobacteriaceae</taxon>
        <taxon>Mycolicibacterium</taxon>
    </lineage>
</organism>
<sequence length="280" mass="30709">MGQKINPHGFRLGITTEWKSRWYADKQYADYIKEDVAIRKLLATGLERAGIADVEIERTRDRVRVDIHTARPGIVIGRRGTEADRIRADLEKLTKKQVQLNILEVKNPESVAQLVAQGVAEQLSNRVAFRRAMRKAIQSAMRQPNVKGIRVQCSGRLGGAEMSRSEFYREGRVPLHTLRADIDYGLYEAKTTFGRIGVKVWIYKGDIVGGKRELTAAAPAADRPRRDRPSGTRPRRSGASGTTATSTDAGRAASEGTVEAPATEAAATAPSAGQPETTES</sequence>
<name>RS3_MYCVP</name>
<feature type="chain" id="PRO_0000293834" description="Small ribosomal subunit protein uS3">
    <location>
        <begin position="1"/>
        <end position="280"/>
    </location>
</feature>
<feature type="domain" description="KH type-2" evidence="1">
    <location>
        <begin position="38"/>
        <end position="106"/>
    </location>
</feature>
<feature type="region of interest" description="Disordered" evidence="2">
    <location>
        <begin position="216"/>
        <end position="280"/>
    </location>
</feature>
<feature type="compositionally biased region" description="Low complexity" evidence="2">
    <location>
        <begin position="237"/>
        <end position="270"/>
    </location>
</feature>
<comment type="function">
    <text evidence="1">Binds the lower part of the 30S subunit head. Binds mRNA in the 70S ribosome, positioning it for translation.</text>
</comment>
<comment type="subunit">
    <text evidence="1">Part of the 30S ribosomal subunit. Forms a tight complex with proteins S10 and S14.</text>
</comment>
<comment type="similarity">
    <text evidence="1">Belongs to the universal ribosomal protein uS3 family.</text>
</comment>
<keyword id="KW-0687">Ribonucleoprotein</keyword>
<keyword id="KW-0689">Ribosomal protein</keyword>
<keyword id="KW-0694">RNA-binding</keyword>
<keyword id="KW-0699">rRNA-binding</keyword>
<reference key="1">
    <citation type="submission" date="2006-12" db="EMBL/GenBank/DDBJ databases">
        <title>Complete sequence of Mycobacterium vanbaalenii PYR-1.</title>
        <authorList>
            <consortium name="US DOE Joint Genome Institute"/>
            <person name="Copeland A."/>
            <person name="Lucas S."/>
            <person name="Lapidus A."/>
            <person name="Barry K."/>
            <person name="Detter J.C."/>
            <person name="Glavina del Rio T."/>
            <person name="Hammon N."/>
            <person name="Israni S."/>
            <person name="Dalin E."/>
            <person name="Tice H."/>
            <person name="Pitluck S."/>
            <person name="Singan V."/>
            <person name="Schmutz J."/>
            <person name="Larimer F."/>
            <person name="Land M."/>
            <person name="Hauser L."/>
            <person name="Kyrpides N."/>
            <person name="Anderson I.J."/>
            <person name="Miller C."/>
            <person name="Richardson P."/>
        </authorList>
    </citation>
    <scope>NUCLEOTIDE SEQUENCE [LARGE SCALE GENOMIC DNA]</scope>
    <source>
        <strain>DSM 7251 / JCM 13017 / BCRC 16820 / KCTC 9966 / NRRL B-24157 / PYR-1</strain>
    </source>
</reference>